<dbReference type="EMBL" id="EU043314">
    <property type="protein sequence ID" value="ABS54473.1"/>
    <property type="molecule type" value="Genomic_DNA"/>
</dbReference>
<dbReference type="RefSeq" id="YP_001687212.1">
    <property type="nucleotide sequence ID" value="NC_010359.1"/>
</dbReference>
<dbReference type="SMR" id="B0YPM6"/>
<dbReference type="GeneID" id="5952133"/>
<dbReference type="GO" id="GO:0009523">
    <property type="term" value="C:photosystem II"/>
    <property type="evidence" value="ECO:0007669"/>
    <property type="project" value="UniProtKB-KW"/>
</dbReference>
<dbReference type="GO" id="GO:0042170">
    <property type="term" value="C:plastid membrane"/>
    <property type="evidence" value="ECO:0007669"/>
    <property type="project" value="UniProtKB-SubCell"/>
</dbReference>
<dbReference type="GO" id="GO:0042651">
    <property type="term" value="C:thylakoid membrane"/>
    <property type="evidence" value="ECO:0007669"/>
    <property type="project" value="UniProtKB-UniRule"/>
</dbReference>
<dbReference type="HAMAP" id="MF_01329">
    <property type="entry name" value="PSII_Psb30_Ycf12"/>
    <property type="match status" value="1"/>
</dbReference>
<dbReference type="InterPro" id="IPR010284">
    <property type="entry name" value="PSII_Ycf12_core-subunit"/>
</dbReference>
<dbReference type="NCBIfam" id="NF010239">
    <property type="entry name" value="PRK13686.1"/>
    <property type="match status" value="1"/>
</dbReference>
<dbReference type="Pfam" id="PF05969">
    <property type="entry name" value="PSII_Ycf12"/>
    <property type="match status" value="1"/>
</dbReference>
<organism>
    <name type="scientific">Aneura mirabilis</name>
    <name type="common">Parasitic liverwort</name>
    <name type="synonym">Cryptothallus mirabilis</name>
    <dbReference type="NCBI Taxonomy" id="280810"/>
    <lineage>
        <taxon>Eukaryota</taxon>
        <taxon>Viridiplantae</taxon>
        <taxon>Streptophyta</taxon>
        <taxon>Embryophyta</taxon>
        <taxon>Marchantiophyta</taxon>
        <taxon>Jungermanniopsida</taxon>
        <taxon>Metzgeriidae</taxon>
        <taxon>Metzgeriales</taxon>
        <taxon>Aneuraceae</taxon>
        <taxon>Aneura</taxon>
    </lineage>
</organism>
<gene>
    <name evidence="1" type="primary">psb30</name>
    <name evidence="1" type="synonym">ycf12</name>
</gene>
<geneLocation type="non-photosynthetic plastid"/>
<accession>B0YPM6</accession>
<feature type="chain" id="PRO_0000342349" description="Photosystem II reaction center protein Psb30">
    <location>
        <begin position="1"/>
        <end position="33"/>
    </location>
</feature>
<feature type="transmembrane region" description="Helical" evidence="1">
    <location>
        <begin position="5"/>
        <end position="25"/>
    </location>
</feature>
<sequence>MNLEVIAQPIVLGLIVASGPLVIVSLAARRGNL</sequence>
<comment type="function">
    <text evidence="1">A core subunit of photosystem II (PSII), probably helps stabilize the reaction center.</text>
</comment>
<comment type="subunit">
    <text evidence="1">PSII is composed of 1 copy each of membrane proteins PsbA, PsbB, PsbC, PsbD, PsbE, PsbF, PsbH, PsbI, PsbJ, PsbK, PsbL, PsbM, PsbT, PsbX, PsbY, PsbZ, Psb30/Ycf12, peripheral proteins of the oxygen-evolving complex and a large number of cofactors. It forms dimeric complexes.</text>
</comment>
<comment type="subcellular location">
    <subcellularLocation>
        <location evidence="2">Plastid membrane</location>
        <topology evidence="1">Single-pass membrane protein</topology>
    </subcellularLocation>
</comment>
<comment type="similarity">
    <text evidence="1">Belongs to the Psb30/Ycf12 family.</text>
</comment>
<comment type="caution">
    <text evidence="2">This organism being non-photosynthetic, the role of this protein is uncertain.</text>
</comment>
<keyword id="KW-0472">Membrane</keyword>
<keyword id="KW-0602">Photosynthesis</keyword>
<keyword id="KW-0604">Photosystem II</keyword>
<keyword id="KW-0934">Plastid</keyword>
<keyword id="KW-0812">Transmembrane</keyword>
<keyword id="KW-1133">Transmembrane helix</keyword>
<proteinExistence type="inferred from homology"/>
<reference key="1">
    <citation type="journal article" date="2008" name="Mol. Biol. Evol.">
        <title>Functional gene losses occur with minimal size reduction in the plastid genome of the parasitic liverwort Aneura mirabilis.</title>
        <authorList>
            <person name="Wickett N.J."/>
            <person name="Zhang Y."/>
            <person name="Hansen S.K."/>
            <person name="Roper J.M."/>
            <person name="Kuehl J.V."/>
            <person name="Plock S.A."/>
            <person name="Wolf P.G."/>
            <person name="dePamphilis C.W."/>
            <person name="Boore J.L."/>
            <person name="Goffinet B."/>
        </authorList>
    </citation>
    <scope>NUCLEOTIDE SEQUENCE [LARGE SCALE GENOMIC DNA]</scope>
</reference>
<name>PSB30_ANEMR</name>
<protein>
    <recommendedName>
        <fullName evidence="1">Photosystem II reaction center protein Psb30</fullName>
    </recommendedName>
    <alternativeName>
        <fullName evidence="1">Photosystem II reaction center protein Ycf12</fullName>
    </alternativeName>
</protein>
<evidence type="ECO:0000255" key="1">
    <source>
        <dbReference type="HAMAP-Rule" id="MF_01329"/>
    </source>
</evidence>
<evidence type="ECO:0000305" key="2"/>